<reference key="1">
    <citation type="journal article" date="2008" name="Genome Res.">
        <title>Comparative genome analysis of Salmonella enteritidis PT4 and Salmonella gallinarum 287/91 provides insights into evolutionary and host adaptation pathways.</title>
        <authorList>
            <person name="Thomson N.R."/>
            <person name="Clayton D.J."/>
            <person name="Windhorst D."/>
            <person name="Vernikos G."/>
            <person name="Davidson S."/>
            <person name="Churcher C."/>
            <person name="Quail M.A."/>
            <person name="Stevens M."/>
            <person name="Jones M.A."/>
            <person name="Watson M."/>
            <person name="Barron A."/>
            <person name="Layton A."/>
            <person name="Pickard D."/>
            <person name="Kingsley R.A."/>
            <person name="Bignell A."/>
            <person name="Clark L."/>
            <person name="Harris B."/>
            <person name="Ormond D."/>
            <person name="Abdellah Z."/>
            <person name="Brooks K."/>
            <person name="Cherevach I."/>
            <person name="Chillingworth T."/>
            <person name="Woodward J."/>
            <person name="Norberczak H."/>
            <person name="Lord A."/>
            <person name="Arrowsmith C."/>
            <person name="Jagels K."/>
            <person name="Moule S."/>
            <person name="Mungall K."/>
            <person name="Saunders M."/>
            <person name="Whitehead S."/>
            <person name="Chabalgoity J.A."/>
            <person name="Maskell D."/>
            <person name="Humphreys T."/>
            <person name="Roberts M."/>
            <person name="Barrow P.A."/>
            <person name="Dougan G."/>
            <person name="Parkhill J."/>
        </authorList>
    </citation>
    <scope>NUCLEOTIDE SEQUENCE [LARGE SCALE GENOMIC DNA]</scope>
    <source>
        <strain>P125109</strain>
    </source>
</reference>
<evidence type="ECO:0000255" key="1">
    <source>
        <dbReference type="HAMAP-Rule" id="MF_01302"/>
    </source>
</evidence>
<evidence type="ECO:0000305" key="2"/>
<sequence>MSMQDPIADMLTRIRNGQAANKAAVTMPSSKLKVAIANVLKEEGFIEDFKVEGDTKPELELTLKYFQGKAVVESIQRVSRPGLRIYKRKDELPKVMAGLGIAVVSTSKGVMTDRAARQAGLGGEIICYVA</sequence>
<organism>
    <name type="scientific">Salmonella enteritidis PT4 (strain P125109)</name>
    <dbReference type="NCBI Taxonomy" id="550537"/>
    <lineage>
        <taxon>Bacteria</taxon>
        <taxon>Pseudomonadati</taxon>
        <taxon>Pseudomonadota</taxon>
        <taxon>Gammaproteobacteria</taxon>
        <taxon>Enterobacterales</taxon>
        <taxon>Enterobacteriaceae</taxon>
        <taxon>Salmonella</taxon>
    </lineage>
</organism>
<protein>
    <recommendedName>
        <fullName evidence="1">Small ribosomal subunit protein uS8</fullName>
    </recommendedName>
    <alternativeName>
        <fullName evidence="2">30S ribosomal protein S8</fullName>
    </alternativeName>
</protein>
<name>RS8_SALEP</name>
<gene>
    <name evidence="1" type="primary">rpsH</name>
    <name type="ordered locus">SEN3254</name>
</gene>
<proteinExistence type="inferred from homology"/>
<keyword id="KW-0687">Ribonucleoprotein</keyword>
<keyword id="KW-0689">Ribosomal protein</keyword>
<keyword id="KW-0694">RNA-binding</keyword>
<keyword id="KW-0699">rRNA-binding</keyword>
<accession>B5R1G3</accession>
<dbReference type="EMBL" id="AM933172">
    <property type="protein sequence ID" value="CAR34829.1"/>
    <property type="molecule type" value="Genomic_DNA"/>
</dbReference>
<dbReference type="RefSeq" id="WP_000062611.1">
    <property type="nucleotide sequence ID" value="NC_011294.1"/>
</dbReference>
<dbReference type="SMR" id="B5R1G3"/>
<dbReference type="GeneID" id="93778681"/>
<dbReference type="KEGG" id="set:SEN3254"/>
<dbReference type="HOGENOM" id="CLU_098428_0_0_6"/>
<dbReference type="Proteomes" id="UP000000613">
    <property type="component" value="Chromosome"/>
</dbReference>
<dbReference type="GO" id="GO:1990904">
    <property type="term" value="C:ribonucleoprotein complex"/>
    <property type="evidence" value="ECO:0007669"/>
    <property type="project" value="UniProtKB-KW"/>
</dbReference>
<dbReference type="GO" id="GO:0005840">
    <property type="term" value="C:ribosome"/>
    <property type="evidence" value="ECO:0007669"/>
    <property type="project" value="UniProtKB-KW"/>
</dbReference>
<dbReference type="GO" id="GO:0019843">
    <property type="term" value="F:rRNA binding"/>
    <property type="evidence" value="ECO:0007669"/>
    <property type="project" value="UniProtKB-UniRule"/>
</dbReference>
<dbReference type="GO" id="GO:0003735">
    <property type="term" value="F:structural constituent of ribosome"/>
    <property type="evidence" value="ECO:0007669"/>
    <property type="project" value="InterPro"/>
</dbReference>
<dbReference type="GO" id="GO:0006412">
    <property type="term" value="P:translation"/>
    <property type="evidence" value="ECO:0007669"/>
    <property type="project" value="UniProtKB-UniRule"/>
</dbReference>
<dbReference type="FunFam" id="3.30.1370.30:FF:000003">
    <property type="entry name" value="30S ribosomal protein S8"/>
    <property type="match status" value="1"/>
</dbReference>
<dbReference type="FunFam" id="3.30.1490.10:FF:000001">
    <property type="entry name" value="30S ribosomal protein S8"/>
    <property type="match status" value="1"/>
</dbReference>
<dbReference type="Gene3D" id="3.30.1370.30">
    <property type="match status" value="1"/>
</dbReference>
<dbReference type="Gene3D" id="3.30.1490.10">
    <property type="match status" value="1"/>
</dbReference>
<dbReference type="HAMAP" id="MF_01302_B">
    <property type="entry name" value="Ribosomal_uS8_B"/>
    <property type="match status" value="1"/>
</dbReference>
<dbReference type="InterPro" id="IPR000630">
    <property type="entry name" value="Ribosomal_uS8"/>
</dbReference>
<dbReference type="InterPro" id="IPR047863">
    <property type="entry name" value="Ribosomal_uS8_CS"/>
</dbReference>
<dbReference type="InterPro" id="IPR035987">
    <property type="entry name" value="Ribosomal_uS8_sf"/>
</dbReference>
<dbReference type="NCBIfam" id="NF001109">
    <property type="entry name" value="PRK00136.1"/>
    <property type="match status" value="1"/>
</dbReference>
<dbReference type="PANTHER" id="PTHR11758">
    <property type="entry name" value="40S RIBOSOMAL PROTEIN S15A"/>
    <property type="match status" value="1"/>
</dbReference>
<dbReference type="Pfam" id="PF00410">
    <property type="entry name" value="Ribosomal_S8"/>
    <property type="match status" value="1"/>
</dbReference>
<dbReference type="SUPFAM" id="SSF56047">
    <property type="entry name" value="Ribosomal protein S8"/>
    <property type="match status" value="1"/>
</dbReference>
<dbReference type="PROSITE" id="PS00053">
    <property type="entry name" value="RIBOSOMAL_S8"/>
    <property type="match status" value="1"/>
</dbReference>
<comment type="function">
    <text evidence="1">One of the primary rRNA binding proteins, it binds directly to 16S rRNA central domain where it helps coordinate assembly of the platform of the 30S subunit.</text>
</comment>
<comment type="subunit">
    <text evidence="1">Part of the 30S ribosomal subunit. Contacts proteins S5 and S12.</text>
</comment>
<comment type="similarity">
    <text evidence="1">Belongs to the universal ribosomal protein uS8 family.</text>
</comment>
<feature type="chain" id="PRO_1000140606" description="Small ribosomal subunit protein uS8">
    <location>
        <begin position="1"/>
        <end position="130"/>
    </location>
</feature>